<comment type="subunit">
    <text evidence="1">Binds DNA in a sequence-specific manner.</text>
</comment>
<comment type="subcellular location">
    <subcellularLocation>
        <location evidence="4">Nucleus</location>
    </subcellularLocation>
</comment>
<name>EDS1_YEAS6</name>
<gene>
    <name type="primary">EDS1</name>
    <name type="ORF">AWRI1631_21220</name>
</gene>
<proteinExistence type="inferred from homology"/>
<reference key="1">
    <citation type="journal article" date="2008" name="FEMS Yeast Res.">
        <title>Comparative genome analysis of a Saccharomyces cerevisiae wine strain.</title>
        <authorList>
            <person name="Borneman A.R."/>
            <person name="Forgan A.H."/>
            <person name="Pretorius I.S."/>
            <person name="Chambers P.J."/>
        </authorList>
    </citation>
    <scope>NUCLEOTIDE SEQUENCE [LARGE SCALE GENOMIC DNA]</scope>
    <source>
        <strain>AWRI1631</strain>
    </source>
</reference>
<protein>
    <recommendedName>
        <fullName>Transcriptional regulatory protein EDS1</fullName>
    </recommendedName>
    <alternativeName>
        <fullName>Expression dependent on SLT2 protein 1</fullName>
    </alternativeName>
</protein>
<accession>B5VDZ9</accession>
<keyword id="KW-0238">DNA-binding</keyword>
<keyword id="KW-0479">Metal-binding</keyword>
<keyword id="KW-0539">Nucleus</keyword>
<keyword id="KW-0804">Transcription</keyword>
<keyword id="KW-0805">Transcription regulation</keyword>
<keyword id="KW-0862">Zinc</keyword>
<feature type="chain" id="PRO_0000408009" description="Transcriptional regulatory protein EDS1">
    <location>
        <begin position="1"/>
        <end position="919"/>
    </location>
</feature>
<feature type="DNA-binding region" description="Zn(2)-C6 fungal-type" evidence="2">
    <location>
        <begin position="56"/>
        <end position="85"/>
    </location>
</feature>
<feature type="region of interest" description="Disordered" evidence="3">
    <location>
        <begin position="1"/>
        <end position="54"/>
    </location>
</feature>
<feature type="region of interest" description="Disordered" evidence="3">
    <location>
        <begin position="297"/>
        <end position="338"/>
    </location>
</feature>
<feature type="compositionally biased region" description="Polar residues" evidence="3">
    <location>
        <begin position="23"/>
        <end position="36"/>
    </location>
</feature>
<feature type="compositionally biased region" description="Basic and acidic residues" evidence="3">
    <location>
        <begin position="37"/>
        <end position="46"/>
    </location>
</feature>
<feature type="compositionally biased region" description="Basic and acidic residues" evidence="3">
    <location>
        <begin position="304"/>
        <end position="317"/>
    </location>
</feature>
<feature type="compositionally biased region" description="Polar residues" evidence="3">
    <location>
        <begin position="318"/>
        <end position="338"/>
    </location>
</feature>
<evidence type="ECO:0000250" key="1"/>
<evidence type="ECO:0000255" key="2">
    <source>
        <dbReference type="PROSITE-ProRule" id="PRU00227"/>
    </source>
</evidence>
<evidence type="ECO:0000256" key="3">
    <source>
        <dbReference type="SAM" id="MobiDB-lite"/>
    </source>
</evidence>
<evidence type="ECO:0000305" key="4"/>
<organism>
    <name type="scientific">Saccharomyces cerevisiae (strain AWRI1631)</name>
    <name type="common">Baker's yeast</name>
    <dbReference type="NCBI Taxonomy" id="545124"/>
    <lineage>
        <taxon>Eukaryota</taxon>
        <taxon>Fungi</taxon>
        <taxon>Dikarya</taxon>
        <taxon>Ascomycota</taxon>
        <taxon>Saccharomycotina</taxon>
        <taxon>Saccharomycetes</taxon>
        <taxon>Saccharomycetales</taxon>
        <taxon>Saccharomycetaceae</taxon>
        <taxon>Saccharomyces</taxon>
    </lineage>
</organism>
<dbReference type="EMBL" id="ABSV01000102">
    <property type="protein sequence ID" value="EDZ73844.1"/>
    <property type="molecule type" value="Genomic_DNA"/>
</dbReference>
<dbReference type="Proteomes" id="UP000008988">
    <property type="component" value="Unassembled WGS sequence"/>
</dbReference>
<dbReference type="GO" id="GO:0005634">
    <property type="term" value="C:nucleus"/>
    <property type="evidence" value="ECO:0007669"/>
    <property type="project" value="UniProtKB-SubCell"/>
</dbReference>
<dbReference type="GO" id="GO:0003677">
    <property type="term" value="F:DNA binding"/>
    <property type="evidence" value="ECO:0007669"/>
    <property type="project" value="UniProtKB-KW"/>
</dbReference>
<dbReference type="GO" id="GO:0000981">
    <property type="term" value="F:DNA-binding transcription factor activity, RNA polymerase II-specific"/>
    <property type="evidence" value="ECO:0007669"/>
    <property type="project" value="InterPro"/>
</dbReference>
<dbReference type="GO" id="GO:0008270">
    <property type="term" value="F:zinc ion binding"/>
    <property type="evidence" value="ECO:0007669"/>
    <property type="project" value="InterPro"/>
</dbReference>
<dbReference type="CDD" id="cd00067">
    <property type="entry name" value="GAL4"/>
    <property type="match status" value="1"/>
</dbReference>
<dbReference type="Gene3D" id="4.10.240.10">
    <property type="entry name" value="Zn(2)-C6 fungal-type DNA-binding domain"/>
    <property type="match status" value="1"/>
</dbReference>
<dbReference type="InterPro" id="IPR050797">
    <property type="entry name" value="Carb_Metab_Trans_Reg"/>
</dbReference>
<dbReference type="InterPro" id="IPR036864">
    <property type="entry name" value="Zn2-C6_fun-type_DNA-bd_sf"/>
</dbReference>
<dbReference type="InterPro" id="IPR001138">
    <property type="entry name" value="Zn2Cys6_DnaBD"/>
</dbReference>
<dbReference type="PANTHER" id="PTHR31668:SF26">
    <property type="entry name" value="GLUCOSE TRANSPORT TRANSCRIPTION REGULATOR RGT1-RELATED"/>
    <property type="match status" value="1"/>
</dbReference>
<dbReference type="PANTHER" id="PTHR31668">
    <property type="entry name" value="GLUCOSE TRANSPORT TRANSCRIPTION REGULATOR RGT1-RELATED-RELATED"/>
    <property type="match status" value="1"/>
</dbReference>
<dbReference type="Pfam" id="PF00172">
    <property type="entry name" value="Zn_clus"/>
    <property type="match status" value="1"/>
</dbReference>
<dbReference type="SMART" id="SM00066">
    <property type="entry name" value="GAL4"/>
    <property type="match status" value="1"/>
</dbReference>
<dbReference type="SUPFAM" id="SSF57701">
    <property type="entry name" value="Zn2/Cys6 DNA-binding domain"/>
    <property type="match status" value="1"/>
</dbReference>
<dbReference type="PROSITE" id="PS00463">
    <property type="entry name" value="ZN2_CY6_FUNGAL_1"/>
    <property type="match status" value="1"/>
</dbReference>
<dbReference type="PROSITE" id="PS50048">
    <property type="entry name" value="ZN2_CY6_FUNGAL_2"/>
    <property type="match status" value="1"/>
</dbReference>
<sequence>MSHHVPNLYGTPIRDPHERKRNSASMGEVNQSVSSRNCERGSEKGTKQRKKASRACDQCRRKRIKCRFDKHTGVCQGCLEVGEKCQFIRVPLKRGPAKKRASVVSIEKFSSDNDPLQYRPRTHSYPMNSGNNYLPSLARNSSFPSISSLFVPSITAQSQQFVKVPYDDIKRRSSLATLGSDSSISTEFGGNYRLDENLNVRQEGKDIVAKGMITPVEEMGACSSNVRRQGSQSLPIQEQRASPYINPFISGRSRLSSLSYTSEATTSEGNTQGKNQCMLTPNSVRSIEKERLNSLTAGCPNKKLGTDGRSDKWDKNSTWKPVYRSSNPSHPSTEKNVSLNQEASAKPLMLGTYRQFDATSFYKVLGIYYNFFHINFPVIPINKSKFTDMLDPEKPNVIDEIRQINNEIIQCFKTALEVLVFCKIKQRRSSKSTKSWSRDSLCDFQKGLYYIQNFNKCIADCFQSLITIKPVLKQNSSVIPSRIKFIYFSTIIVLNFILILAGEESSLLLGPSVGVFNEFQAHKLFLPFENTSPMLLLNSNEESGDEILDYAVLFKRLYILLNILDTLQSFRLGQPKLINLNFGSAIETYFSDKTGHNQVVEKAPVALDNILRNLKLGEFITYFVLNRKSLQVNVPHHLLFTNQTDYGEFAVEKGEHDNIAGKFETLLKKKEILIRKLLNIEQKNDHILENCCNSDAEMKNIGELVCSMITLVSGILDSITNMNAENSVDLDSKPLPNAYFAQDSEEELMSPTQSITSNLASEENTRCTTKDLMGTVSIFMLPMVEECYNIISLIGPIPTTLISLYIRNGNMAKGINDRIMTLSTALNELVQITALFNTLEPFRKNAHDRAKRYYVSATSSTGCYESVMKSMYSGKCAASNASNVAPSEEENKKILKKFADIGWKLMDDSELGCCCCFFN</sequence>